<organism>
    <name type="scientific">Rattus norvegicus</name>
    <name type="common">Rat</name>
    <dbReference type="NCBI Taxonomy" id="10116"/>
    <lineage>
        <taxon>Eukaryota</taxon>
        <taxon>Metazoa</taxon>
        <taxon>Chordata</taxon>
        <taxon>Craniata</taxon>
        <taxon>Vertebrata</taxon>
        <taxon>Euteleostomi</taxon>
        <taxon>Mammalia</taxon>
        <taxon>Eutheria</taxon>
        <taxon>Euarchontoglires</taxon>
        <taxon>Glires</taxon>
        <taxon>Rodentia</taxon>
        <taxon>Myomorpha</taxon>
        <taxon>Muroidea</taxon>
        <taxon>Muridae</taxon>
        <taxon>Murinae</taxon>
        <taxon>Rattus</taxon>
    </lineage>
</organism>
<protein>
    <recommendedName>
        <fullName>UPF0462 protein C4orf33 homolog</fullName>
    </recommendedName>
</protein>
<keyword id="KW-1185">Reference proteome</keyword>
<comment type="similarity">
    <text evidence="1">Belongs to the UPF0462 family.</text>
</comment>
<accession>Q5M845</accession>
<proteinExistence type="evidence at transcript level"/>
<reference key="1">
    <citation type="journal article" date="2004" name="Genome Res.">
        <title>The status, quality, and expansion of the NIH full-length cDNA project: the Mammalian Gene Collection (MGC).</title>
        <authorList>
            <consortium name="The MGC Project Team"/>
        </authorList>
    </citation>
    <scope>NUCLEOTIDE SEQUENCE [LARGE SCALE MRNA]</scope>
    <source>
        <tissue>Liver</tissue>
    </source>
</reference>
<evidence type="ECO:0000305" key="1"/>
<dbReference type="EMBL" id="BC088236">
    <property type="protein sequence ID" value="AAH88236.1"/>
    <property type="molecule type" value="mRNA"/>
</dbReference>
<dbReference type="RefSeq" id="NP_001009707.1">
    <property type="nucleotide sequence ID" value="NM_001009707.1"/>
</dbReference>
<dbReference type="RefSeq" id="XP_006232368.1">
    <property type="nucleotide sequence ID" value="XM_006232306.5"/>
</dbReference>
<dbReference type="RefSeq" id="XP_006232370.1">
    <property type="nucleotide sequence ID" value="XM_006232308.5"/>
</dbReference>
<dbReference type="RefSeq" id="XP_038958523.1">
    <property type="nucleotide sequence ID" value="XM_039102595.2"/>
</dbReference>
<dbReference type="SMR" id="Q5M845"/>
<dbReference type="FunCoup" id="Q5M845">
    <property type="interactions" value="959"/>
</dbReference>
<dbReference type="STRING" id="10116.ENSRNOP00000055168"/>
<dbReference type="PhosphoSitePlus" id="Q5M845"/>
<dbReference type="PaxDb" id="10116-ENSRNOP00000055168"/>
<dbReference type="Ensembl" id="ENSRNOT00000058366.3">
    <property type="protein sequence ID" value="ENSRNOP00000055168.2"/>
    <property type="gene ID" value="ENSRNOG00000038330.3"/>
</dbReference>
<dbReference type="GeneID" id="361941"/>
<dbReference type="KEGG" id="rno:361941"/>
<dbReference type="UCSC" id="RGD:1359508">
    <property type="organism name" value="rat"/>
</dbReference>
<dbReference type="AGR" id="RGD:1359508"/>
<dbReference type="CTD" id="361941"/>
<dbReference type="RGD" id="1359508">
    <property type="gene designation" value="C2h4orf33"/>
</dbReference>
<dbReference type="eggNOG" id="ENOG502R3ZD">
    <property type="taxonomic scope" value="Eukaryota"/>
</dbReference>
<dbReference type="GeneTree" id="ENSGT00390000006284"/>
<dbReference type="HOGENOM" id="CLU_075391_1_0_1"/>
<dbReference type="InParanoid" id="Q5M845"/>
<dbReference type="OMA" id="TIFGEEW"/>
<dbReference type="OrthoDB" id="10056816at2759"/>
<dbReference type="PhylomeDB" id="Q5M845"/>
<dbReference type="TreeFam" id="TF313077"/>
<dbReference type="PRO" id="PR:Q5M845"/>
<dbReference type="Proteomes" id="UP000002494">
    <property type="component" value="Chromosome 2"/>
</dbReference>
<dbReference type="Bgee" id="ENSRNOG00000038330">
    <property type="expression patterns" value="Expressed in duodenum and 19 other cell types or tissues"/>
</dbReference>
<dbReference type="Gene3D" id="2.60.40.1190">
    <property type="match status" value="1"/>
</dbReference>
<dbReference type="PANTHER" id="PTHR31475">
    <property type="entry name" value="UPF0462 PROTEIN"/>
    <property type="match status" value="1"/>
</dbReference>
<dbReference type="PANTHER" id="PTHR31475:SF3">
    <property type="entry name" value="UPF0462 PROTEIN C4ORF33"/>
    <property type="match status" value="1"/>
</dbReference>
<name>CD033_RAT</name>
<sequence>MDFKIEYTWDSFPVSHEPVRIRLNPCDKGLKMEVSAPFFNDPPAPLGEPGKPFSELWNYEVVEAFFLNNTTEQYLEVELCPHGQHLVLLLSGRRNVWKKELALSFKVSRGETHWEGEAFLPWSYFPSKVTRFNSFAIHGSNDKRVYEALYPVPQPELQQGQNPDFHRLEYFKPFSFNTLLGEEWKQPESDLWLIEKSDI</sequence>
<feature type="chain" id="PRO_0000295716" description="UPF0462 protein C4orf33 homolog">
    <location>
        <begin position="1"/>
        <end position="199"/>
    </location>
</feature>